<name>SPEE_SALAR</name>
<comment type="function">
    <text evidence="1">Catalyzes the irreversible transfer of a propylamine group from the amino donor S-adenosylmethioninamine (decarboxy-AdoMet) to putrescine (1,4-diaminobutane) to yield spermidine.</text>
</comment>
<comment type="catalytic activity">
    <reaction evidence="1">
        <text>S-adenosyl 3-(methylsulfanyl)propylamine + putrescine = S-methyl-5'-thioadenosine + spermidine + H(+)</text>
        <dbReference type="Rhea" id="RHEA:12721"/>
        <dbReference type="ChEBI" id="CHEBI:15378"/>
        <dbReference type="ChEBI" id="CHEBI:17509"/>
        <dbReference type="ChEBI" id="CHEBI:57443"/>
        <dbReference type="ChEBI" id="CHEBI:57834"/>
        <dbReference type="ChEBI" id="CHEBI:326268"/>
        <dbReference type="EC" id="2.5.1.16"/>
    </reaction>
</comment>
<comment type="pathway">
    <text evidence="1">Amine and polyamine biosynthesis; spermidine biosynthesis; spermidine from putrescine: step 1/1.</text>
</comment>
<comment type="subunit">
    <text evidence="1">Homodimer or homotetramer.</text>
</comment>
<comment type="subcellular location">
    <subcellularLocation>
        <location evidence="1">Cytoplasm</location>
    </subcellularLocation>
</comment>
<comment type="similarity">
    <text evidence="1">Belongs to the spermidine/spermine synthase family.</text>
</comment>
<reference key="1">
    <citation type="submission" date="2007-11" db="EMBL/GenBank/DDBJ databases">
        <authorList>
            <consortium name="The Salmonella enterica serovar Arizonae Genome Sequencing Project"/>
            <person name="McClelland M."/>
            <person name="Sanderson E.K."/>
            <person name="Porwollik S."/>
            <person name="Spieth J."/>
            <person name="Clifton W.S."/>
            <person name="Fulton R."/>
            <person name="Chunyan W."/>
            <person name="Wollam A."/>
            <person name="Shah N."/>
            <person name="Pepin K."/>
            <person name="Bhonagiri V."/>
            <person name="Nash W."/>
            <person name="Johnson M."/>
            <person name="Thiruvilangam P."/>
            <person name="Wilson R."/>
        </authorList>
    </citation>
    <scope>NUCLEOTIDE SEQUENCE [LARGE SCALE GENOMIC DNA]</scope>
    <source>
        <strain>ATCC BAA-731 / CDC346-86 / RSK2980</strain>
    </source>
</reference>
<accession>A9MPN3</accession>
<keyword id="KW-0963">Cytoplasm</keyword>
<keyword id="KW-0620">Polyamine biosynthesis</keyword>
<keyword id="KW-1185">Reference proteome</keyword>
<keyword id="KW-0745">Spermidine biosynthesis</keyword>
<keyword id="KW-0808">Transferase</keyword>
<protein>
    <recommendedName>
        <fullName evidence="1">Polyamine aminopropyltransferase</fullName>
    </recommendedName>
    <alternativeName>
        <fullName evidence="1">Putrescine aminopropyltransferase</fullName>
        <shortName evidence="1">PAPT</shortName>
    </alternativeName>
    <alternativeName>
        <fullName evidence="1">Spermidine synthase</fullName>
        <shortName evidence="1">SPDS</shortName>
        <shortName evidence="1">SPDSY</shortName>
        <ecNumber evidence="1">2.5.1.16</ecNumber>
    </alternativeName>
</protein>
<evidence type="ECO:0000255" key="1">
    <source>
        <dbReference type="HAMAP-Rule" id="MF_00198"/>
    </source>
</evidence>
<dbReference type="EC" id="2.5.1.16" evidence="1"/>
<dbReference type="EMBL" id="CP000880">
    <property type="protein sequence ID" value="ABX22676.1"/>
    <property type="molecule type" value="Genomic_DNA"/>
</dbReference>
<dbReference type="SMR" id="A9MPN3"/>
<dbReference type="STRING" id="41514.SARI_02828"/>
<dbReference type="KEGG" id="ses:SARI_02828"/>
<dbReference type="HOGENOM" id="CLU_048199_1_0_6"/>
<dbReference type="UniPathway" id="UPA00248">
    <property type="reaction ID" value="UER00314"/>
</dbReference>
<dbReference type="Proteomes" id="UP000002084">
    <property type="component" value="Chromosome"/>
</dbReference>
<dbReference type="GO" id="GO:0005829">
    <property type="term" value="C:cytosol"/>
    <property type="evidence" value="ECO:0007669"/>
    <property type="project" value="TreeGrafter"/>
</dbReference>
<dbReference type="GO" id="GO:0004766">
    <property type="term" value="F:spermidine synthase activity"/>
    <property type="evidence" value="ECO:0007669"/>
    <property type="project" value="UniProtKB-UniRule"/>
</dbReference>
<dbReference type="GO" id="GO:0008295">
    <property type="term" value="P:spermidine biosynthetic process"/>
    <property type="evidence" value="ECO:0007669"/>
    <property type="project" value="UniProtKB-UniRule"/>
</dbReference>
<dbReference type="CDD" id="cd02440">
    <property type="entry name" value="AdoMet_MTases"/>
    <property type="match status" value="1"/>
</dbReference>
<dbReference type="FunFam" id="2.30.140.10:FF:000002">
    <property type="entry name" value="Polyamine aminopropyltransferase"/>
    <property type="match status" value="1"/>
</dbReference>
<dbReference type="FunFam" id="3.40.50.150:FF:000026">
    <property type="entry name" value="Polyamine aminopropyltransferase"/>
    <property type="match status" value="1"/>
</dbReference>
<dbReference type="Gene3D" id="2.30.140.10">
    <property type="entry name" value="Spermidine synthase, tetramerisation domain"/>
    <property type="match status" value="1"/>
</dbReference>
<dbReference type="Gene3D" id="3.40.50.150">
    <property type="entry name" value="Vaccinia Virus protein VP39"/>
    <property type="match status" value="1"/>
</dbReference>
<dbReference type="HAMAP" id="MF_00198">
    <property type="entry name" value="Spermidine_synth"/>
    <property type="match status" value="1"/>
</dbReference>
<dbReference type="InterPro" id="IPR030374">
    <property type="entry name" value="PABS"/>
</dbReference>
<dbReference type="InterPro" id="IPR030373">
    <property type="entry name" value="PABS_CS"/>
</dbReference>
<dbReference type="InterPro" id="IPR029063">
    <property type="entry name" value="SAM-dependent_MTases_sf"/>
</dbReference>
<dbReference type="InterPro" id="IPR001045">
    <property type="entry name" value="Spermi_synthase"/>
</dbReference>
<dbReference type="InterPro" id="IPR035246">
    <property type="entry name" value="Spermidine_synt_N"/>
</dbReference>
<dbReference type="InterPro" id="IPR037163">
    <property type="entry name" value="Spermidine_synt_N_sf"/>
</dbReference>
<dbReference type="NCBIfam" id="NF037959">
    <property type="entry name" value="MFS_SpdSyn"/>
    <property type="match status" value="1"/>
</dbReference>
<dbReference type="NCBIfam" id="NF002010">
    <property type="entry name" value="PRK00811.1"/>
    <property type="match status" value="1"/>
</dbReference>
<dbReference type="NCBIfam" id="TIGR00417">
    <property type="entry name" value="speE"/>
    <property type="match status" value="1"/>
</dbReference>
<dbReference type="PANTHER" id="PTHR11558:SF11">
    <property type="entry name" value="SPERMIDINE SYNTHASE"/>
    <property type="match status" value="1"/>
</dbReference>
<dbReference type="PANTHER" id="PTHR11558">
    <property type="entry name" value="SPERMIDINE/SPERMINE SYNTHASE"/>
    <property type="match status" value="1"/>
</dbReference>
<dbReference type="Pfam" id="PF17284">
    <property type="entry name" value="Spermine_synt_N"/>
    <property type="match status" value="1"/>
</dbReference>
<dbReference type="Pfam" id="PF01564">
    <property type="entry name" value="Spermine_synth"/>
    <property type="match status" value="1"/>
</dbReference>
<dbReference type="SUPFAM" id="SSF53335">
    <property type="entry name" value="S-adenosyl-L-methionine-dependent methyltransferases"/>
    <property type="match status" value="1"/>
</dbReference>
<dbReference type="PROSITE" id="PS01330">
    <property type="entry name" value="PABS_1"/>
    <property type="match status" value="1"/>
</dbReference>
<dbReference type="PROSITE" id="PS51006">
    <property type="entry name" value="PABS_2"/>
    <property type="match status" value="1"/>
</dbReference>
<organism>
    <name type="scientific">Salmonella arizonae (strain ATCC BAA-731 / CDC346-86 / RSK2980)</name>
    <dbReference type="NCBI Taxonomy" id="41514"/>
    <lineage>
        <taxon>Bacteria</taxon>
        <taxon>Pseudomonadati</taxon>
        <taxon>Pseudomonadota</taxon>
        <taxon>Gammaproteobacteria</taxon>
        <taxon>Enterobacterales</taxon>
        <taxon>Enterobacteriaceae</taxon>
        <taxon>Salmonella</taxon>
    </lineage>
</organism>
<proteinExistence type="inferred from homology"/>
<feature type="chain" id="PRO_1000077710" description="Polyamine aminopropyltransferase">
    <location>
        <begin position="1"/>
        <end position="286"/>
    </location>
</feature>
<feature type="domain" description="PABS" evidence="1">
    <location>
        <begin position="5"/>
        <end position="238"/>
    </location>
</feature>
<feature type="active site" description="Proton acceptor" evidence="1">
    <location>
        <position position="158"/>
    </location>
</feature>
<feature type="binding site" evidence="1">
    <location>
        <position position="33"/>
    </location>
    <ligand>
        <name>S-methyl-5'-thioadenosine</name>
        <dbReference type="ChEBI" id="CHEBI:17509"/>
    </ligand>
</feature>
<feature type="binding site" evidence="1">
    <location>
        <position position="64"/>
    </location>
    <ligand>
        <name>spermidine</name>
        <dbReference type="ChEBI" id="CHEBI:57834"/>
    </ligand>
</feature>
<feature type="binding site" evidence="1">
    <location>
        <position position="88"/>
    </location>
    <ligand>
        <name>spermidine</name>
        <dbReference type="ChEBI" id="CHEBI:57834"/>
    </ligand>
</feature>
<feature type="binding site" evidence="1">
    <location>
        <position position="108"/>
    </location>
    <ligand>
        <name>S-methyl-5'-thioadenosine</name>
        <dbReference type="ChEBI" id="CHEBI:17509"/>
    </ligand>
</feature>
<feature type="binding site" evidence="1">
    <location>
        <begin position="140"/>
        <end position="141"/>
    </location>
    <ligand>
        <name>S-methyl-5'-thioadenosine</name>
        <dbReference type="ChEBI" id="CHEBI:17509"/>
    </ligand>
</feature>
<feature type="binding site" evidence="1">
    <location>
        <begin position="158"/>
        <end position="161"/>
    </location>
    <ligand>
        <name>spermidine</name>
        <dbReference type="ChEBI" id="CHEBI:57834"/>
    </ligand>
</feature>
<feature type="binding site" evidence="1">
    <location>
        <position position="165"/>
    </location>
    <ligand>
        <name>S-methyl-5'-thioadenosine</name>
        <dbReference type="ChEBI" id="CHEBI:17509"/>
    </ligand>
</feature>
<sequence>MAENTMWHETLHDQFGQYFAVDNVLYHEKTDHQDLIIFENAAFGRVMALDGVVQTTERDEFIYHEMMTHVPLLAHGHAKHVLIIGGGDGAMLREVTRHKNVETITMVEIDAGVVSFCRQYLPNHNAGSYDDPRFTLVIDDGVNFVNQTHQTFDVIISDCTDPIGPGESLFTSAFYEGCKRCLNPGGIFVAQNGVCFLQQDEALDSHRKLSHYFSDVSFYQAAIPTYYGGIMTFAWATDNDAIRHLSSETIQARFHAAGLKCRYYNPAIHAAAFALPQYLHDALSAQ</sequence>
<gene>
    <name evidence="1" type="primary">speE</name>
    <name type="ordered locus">SARI_02828</name>
</gene>